<name>SLX4_ASPFU</name>
<dbReference type="EMBL" id="AAHF01000008">
    <property type="protein sequence ID" value="EAL87417.2"/>
    <property type="molecule type" value="Genomic_DNA"/>
</dbReference>
<dbReference type="RefSeq" id="XP_749455.2">
    <property type="nucleotide sequence ID" value="XM_744362.2"/>
</dbReference>
<dbReference type="SMR" id="Q4WI38"/>
<dbReference type="STRING" id="330879.Q4WI38"/>
<dbReference type="EnsemblFungi" id="EAL87417">
    <property type="protein sequence ID" value="EAL87417"/>
    <property type="gene ID" value="AFUA_2G03200"/>
</dbReference>
<dbReference type="GeneID" id="3506707"/>
<dbReference type="KEGG" id="afm:AFUA_2G03200"/>
<dbReference type="VEuPathDB" id="FungiDB:Afu2g03200"/>
<dbReference type="eggNOG" id="ENOG502S832">
    <property type="taxonomic scope" value="Eukaryota"/>
</dbReference>
<dbReference type="HOGENOM" id="CLU_016773_0_0_1"/>
<dbReference type="InParanoid" id="Q4WI38"/>
<dbReference type="OMA" id="SICCLWK"/>
<dbReference type="OrthoDB" id="5349119at2759"/>
<dbReference type="Proteomes" id="UP000002530">
    <property type="component" value="Chromosome 2"/>
</dbReference>
<dbReference type="GO" id="GO:0033557">
    <property type="term" value="C:Slx1-Slx4 complex"/>
    <property type="evidence" value="ECO:0007669"/>
    <property type="project" value="UniProtKB-UniRule"/>
</dbReference>
<dbReference type="GO" id="GO:0017108">
    <property type="term" value="F:5'-flap endonuclease activity"/>
    <property type="evidence" value="ECO:0007669"/>
    <property type="project" value="InterPro"/>
</dbReference>
<dbReference type="GO" id="GO:0006310">
    <property type="term" value="P:DNA recombination"/>
    <property type="evidence" value="ECO:0007669"/>
    <property type="project" value="UniProtKB-UniRule"/>
</dbReference>
<dbReference type="GO" id="GO:0006281">
    <property type="term" value="P:DNA repair"/>
    <property type="evidence" value="ECO:0007669"/>
    <property type="project" value="UniProtKB-UniRule"/>
</dbReference>
<dbReference type="GO" id="GO:0006260">
    <property type="term" value="P:DNA replication"/>
    <property type="evidence" value="ECO:0007669"/>
    <property type="project" value="InterPro"/>
</dbReference>
<dbReference type="CDD" id="cd22999">
    <property type="entry name" value="SAP_SLX4"/>
    <property type="match status" value="1"/>
</dbReference>
<dbReference type="HAMAP" id="MF_03110">
    <property type="entry name" value="Endonuc_su_Slx4"/>
    <property type="match status" value="1"/>
</dbReference>
<dbReference type="InterPro" id="IPR027784">
    <property type="entry name" value="Slx4_ascomycetes"/>
</dbReference>
<dbReference type="InterPro" id="IPR018574">
    <property type="entry name" value="Structure-sp_endonuc_su_Slx4"/>
</dbReference>
<dbReference type="Pfam" id="PF09494">
    <property type="entry name" value="Slx4"/>
    <property type="match status" value="1"/>
</dbReference>
<comment type="function">
    <text evidence="1">Regulatory subunit of the slx1-slx4 structure-specific endonuclease that resolves DNA secondary structures generated during DNA repair and recombination. Has endonuclease activity towards branched DNA substrates, introducing single-strand cuts in duplex DNA close to junctions with ss-DNA.</text>
</comment>
<comment type="subunit">
    <text evidence="1">Forms a heterodimer with slx1.</text>
</comment>
<comment type="subcellular location">
    <subcellularLocation>
        <location evidence="1">Nucleus</location>
    </subcellularLocation>
</comment>
<comment type="PTM">
    <text evidence="1">Phosphorylated in response to DNA damage.</text>
</comment>
<comment type="similarity">
    <text evidence="1">Belongs to the SLX4 family.</text>
</comment>
<protein>
    <recommendedName>
        <fullName evidence="1">Structure-specific endonuclease subunit slx4</fullName>
    </recommendedName>
</protein>
<gene>
    <name type="primary">slx4</name>
    <name type="ORF">AFUA_2G03200</name>
</gene>
<proteinExistence type="inferred from homology"/>
<sequence length="811" mass="89384">MCTTTDVVVLSSSPDQIRSCSLANPKCGAEKAFVLSPVSSSPSFLPSSSDLFQPPTRSRFFKPGGGNEGSSRTAREESETGTKQNDLAASRKKAAVRGGRQKRTKEQPPNESQTLFDNPEPPIPKHNGCTSKKGTGSRKKRIDAASKCTKSGSKKITGKVTKPGITETTKFENKTKNVTSDVSPGKSPANKLELEKDGLQIEVAMKRRLDWTPTKDTGKQAVALDDTGDNKTRFGELLSEYGFLKAAAVSQTDSKLSDGAPTKCRRLELVDTHNPSTSKRTSPDADSDRSNVRSTRSSRAPAAEGKSKKRSRKITTLTGRVTALYTKDCTDHLDAANTMIRASEDVSSKLLSKSLDLDSCVLAPGDAVDYLQDQDLIFGTCSQLEREDSPTMLRDMQKEICASKNSMIENRKPSSTTRAGSGLYSHTTVSRFQTQRDLWSVAARDMDGSLAEIEVLDMVDITDVSELPPKPNGELPDRSEKNDEDTVSQGESSRPIEITDDFGVEVDVRMEYLATSETKPEETAYAASEIRPMPRFADWKDSDLSRQVRLYGFKPMKNRRKMIEVLERCWKAQHSSTRTGVQYAPGKPDDGSTGKAGTIGSQMNKQSSKMDAAEKMRRESACLKEKAKSSTALEDKLSHATDRSSQMLTKSSFAHMEEIEDSEDEVIPSPSQLQSLYKRHISESRSSHPLPVSDTPSTPSSRTRTNADSDTKPSPSDSATESSLPDLASQITKAVRLQPRSFSVDCKRPSWHEKILMYDPIILEDFATWLNIEGLGLVHEDREVSAEFVRQWCESNGICCGFRKNSRRSER</sequence>
<organism>
    <name type="scientific">Aspergillus fumigatus (strain ATCC MYA-4609 / CBS 101355 / FGSC A1100 / Af293)</name>
    <name type="common">Neosartorya fumigata</name>
    <dbReference type="NCBI Taxonomy" id="330879"/>
    <lineage>
        <taxon>Eukaryota</taxon>
        <taxon>Fungi</taxon>
        <taxon>Dikarya</taxon>
        <taxon>Ascomycota</taxon>
        <taxon>Pezizomycotina</taxon>
        <taxon>Eurotiomycetes</taxon>
        <taxon>Eurotiomycetidae</taxon>
        <taxon>Eurotiales</taxon>
        <taxon>Aspergillaceae</taxon>
        <taxon>Aspergillus</taxon>
        <taxon>Aspergillus subgen. Fumigati</taxon>
    </lineage>
</organism>
<keyword id="KW-0227">DNA damage</keyword>
<keyword id="KW-0233">DNA recombination</keyword>
<keyword id="KW-0234">DNA repair</keyword>
<keyword id="KW-0539">Nucleus</keyword>
<keyword id="KW-0597">Phosphoprotein</keyword>
<keyword id="KW-1185">Reference proteome</keyword>
<accession>Q4WI38</accession>
<feature type="chain" id="PRO_0000388014" description="Structure-specific endonuclease subunit slx4">
    <location>
        <begin position="1"/>
        <end position="811"/>
    </location>
</feature>
<feature type="region of interest" description="Disordered" evidence="2">
    <location>
        <begin position="38"/>
        <end position="193"/>
    </location>
</feature>
<feature type="region of interest" description="Disordered" evidence="2">
    <location>
        <begin position="266"/>
        <end position="312"/>
    </location>
</feature>
<feature type="region of interest" description="Disordered" evidence="2">
    <location>
        <begin position="464"/>
        <end position="498"/>
    </location>
</feature>
<feature type="region of interest" description="Disordered" evidence="2">
    <location>
        <begin position="579"/>
        <end position="649"/>
    </location>
</feature>
<feature type="region of interest" description="Disordered" evidence="2">
    <location>
        <begin position="680"/>
        <end position="726"/>
    </location>
</feature>
<feature type="compositionally biased region" description="Low complexity" evidence="2">
    <location>
        <begin position="38"/>
        <end position="49"/>
    </location>
</feature>
<feature type="compositionally biased region" description="Basic residues" evidence="2">
    <location>
        <begin position="90"/>
        <end position="103"/>
    </location>
</feature>
<feature type="compositionally biased region" description="Polar residues" evidence="2">
    <location>
        <begin position="107"/>
        <end position="116"/>
    </location>
</feature>
<feature type="compositionally biased region" description="Basic and acidic residues" evidence="2">
    <location>
        <begin position="281"/>
        <end position="291"/>
    </location>
</feature>
<feature type="compositionally biased region" description="Polar residues" evidence="2">
    <location>
        <begin position="599"/>
        <end position="609"/>
    </location>
</feature>
<feature type="compositionally biased region" description="Basic and acidic residues" evidence="2">
    <location>
        <begin position="611"/>
        <end position="642"/>
    </location>
</feature>
<feature type="compositionally biased region" description="Low complexity" evidence="2">
    <location>
        <begin position="689"/>
        <end position="704"/>
    </location>
</feature>
<feature type="compositionally biased region" description="Polar residues" evidence="2">
    <location>
        <begin position="712"/>
        <end position="723"/>
    </location>
</feature>
<evidence type="ECO:0000255" key="1">
    <source>
        <dbReference type="HAMAP-Rule" id="MF_03110"/>
    </source>
</evidence>
<evidence type="ECO:0000256" key="2">
    <source>
        <dbReference type="SAM" id="MobiDB-lite"/>
    </source>
</evidence>
<reference key="1">
    <citation type="journal article" date="2005" name="Nature">
        <title>Genomic sequence of the pathogenic and allergenic filamentous fungus Aspergillus fumigatus.</title>
        <authorList>
            <person name="Nierman W.C."/>
            <person name="Pain A."/>
            <person name="Anderson M.J."/>
            <person name="Wortman J.R."/>
            <person name="Kim H.S."/>
            <person name="Arroyo J."/>
            <person name="Berriman M."/>
            <person name="Abe K."/>
            <person name="Archer D.B."/>
            <person name="Bermejo C."/>
            <person name="Bennett J.W."/>
            <person name="Bowyer P."/>
            <person name="Chen D."/>
            <person name="Collins M."/>
            <person name="Coulsen R."/>
            <person name="Davies R."/>
            <person name="Dyer P.S."/>
            <person name="Farman M.L."/>
            <person name="Fedorova N."/>
            <person name="Fedorova N.D."/>
            <person name="Feldblyum T.V."/>
            <person name="Fischer R."/>
            <person name="Fosker N."/>
            <person name="Fraser A."/>
            <person name="Garcia J.L."/>
            <person name="Garcia M.J."/>
            <person name="Goble A."/>
            <person name="Goldman G.H."/>
            <person name="Gomi K."/>
            <person name="Griffith-Jones S."/>
            <person name="Gwilliam R."/>
            <person name="Haas B.J."/>
            <person name="Haas H."/>
            <person name="Harris D.E."/>
            <person name="Horiuchi H."/>
            <person name="Huang J."/>
            <person name="Humphray S."/>
            <person name="Jimenez J."/>
            <person name="Keller N."/>
            <person name="Khouri H."/>
            <person name="Kitamoto K."/>
            <person name="Kobayashi T."/>
            <person name="Konzack S."/>
            <person name="Kulkarni R."/>
            <person name="Kumagai T."/>
            <person name="Lafton A."/>
            <person name="Latge J.-P."/>
            <person name="Li W."/>
            <person name="Lord A."/>
            <person name="Lu C."/>
            <person name="Majoros W.H."/>
            <person name="May G.S."/>
            <person name="Miller B.L."/>
            <person name="Mohamoud Y."/>
            <person name="Molina M."/>
            <person name="Monod M."/>
            <person name="Mouyna I."/>
            <person name="Mulligan S."/>
            <person name="Murphy L.D."/>
            <person name="O'Neil S."/>
            <person name="Paulsen I."/>
            <person name="Penalva M.A."/>
            <person name="Pertea M."/>
            <person name="Price C."/>
            <person name="Pritchard B.L."/>
            <person name="Quail M.A."/>
            <person name="Rabbinowitsch E."/>
            <person name="Rawlins N."/>
            <person name="Rajandream M.A."/>
            <person name="Reichard U."/>
            <person name="Renauld H."/>
            <person name="Robson G.D."/>
            <person name="Rodriguez de Cordoba S."/>
            <person name="Rodriguez-Pena J.M."/>
            <person name="Ronning C.M."/>
            <person name="Rutter S."/>
            <person name="Salzberg S.L."/>
            <person name="Sanchez M."/>
            <person name="Sanchez-Ferrero J.C."/>
            <person name="Saunders D."/>
            <person name="Seeger K."/>
            <person name="Squares R."/>
            <person name="Squares S."/>
            <person name="Takeuchi M."/>
            <person name="Tekaia F."/>
            <person name="Turner G."/>
            <person name="Vazquez de Aldana C.R."/>
            <person name="Weidman J."/>
            <person name="White O."/>
            <person name="Woodward J.R."/>
            <person name="Yu J.-H."/>
            <person name="Fraser C.M."/>
            <person name="Galagan J.E."/>
            <person name="Asai K."/>
            <person name="Machida M."/>
            <person name="Hall N."/>
            <person name="Barrell B.G."/>
            <person name="Denning D.W."/>
        </authorList>
    </citation>
    <scope>NUCLEOTIDE SEQUENCE [LARGE SCALE GENOMIC DNA]</scope>
    <source>
        <strain>ATCC MYA-4609 / CBS 101355 / FGSC A1100 / Af293</strain>
    </source>
</reference>